<keyword id="KW-0342">GTP-binding</keyword>
<keyword id="KW-0378">Hydrolase</keyword>
<keyword id="KW-0479">Metal-binding</keyword>
<keyword id="KW-0547">Nucleotide-binding</keyword>
<keyword id="KW-0554">One-carbon metabolism</keyword>
<keyword id="KW-1185">Reference proteome</keyword>
<keyword id="KW-0862">Zinc</keyword>
<organism>
    <name type="scientific">Clostridium botulinum (strain Hall / ATCC 3502 / NCTC 13319 / Type A)</name>
    <dbReference type="NCBI Taxonomy" id="441771"/>
    <lineage>
        <taxon>Bacteria</taxon>
        <taxon>Bacillati</taxon>
        <taxon>Bacillota</taxon>
        <taxon>Clostridia</taxon>
        <taxon>Eubacteriales</taxon>
        <taxon>Clostridiaceae</taxon>
        <taxon>Clostridium</taxon>
    </lineage>
</organism>
<reference key="1">
    <citation type="journal article" date="2007" name="Genome Res.">
        <title>Genome sequence of a proteolytic (Group I) Clostridium botulinum strain Hall A and comparative analysis of the clostridial genomes.</title>
        <authorList>
            <person name="Sebaihia M."/>
            <person name="Peck M.W."/>
            <person name="Minton N.P."/>
            <person name="Thomson N.R."/>
            <person name="Holden M.T.G."/>
            <person name="Mitchell W.J."/>
            <person name="Carter A.T."/>
            <person name="Bentley S.D."/>
            <person name="Mason D.R."/>
            <person name="Crossman L."/>
            <person name="Paul C.J."/>
            <person name="Ivens A."/>
            <person name="Wells-Bennik M.H.J."/>
            <person name="Davis I.J."/>
            <person name="Cerdeno-Tarraga A.M."/>
            <person name="Churcher C."/>
            <person name="Quail M.A."/>
            <person name="Chillingworth T."/>
            <person name="Feltwell T."/>
            <person name="Fraser A."/>
            <person name="Goodhead I."/>
            <person name="Hance Z."/>
            <person name="Jagels K."/>
            <person name="Larke N."/>
            <person name="Maddison M."/>
            <person name="Moule S."/>
            <person name="Mungall K."/>
            <person name="Norbertczak H."/>
            <person name="Rabbinowitsch E."/>
            <person name="Sanders M."/>
            <person name="Simmonds M."/>
            <person name="White B."/>
            <person name="Whithead S."/>
            <person name="Parkhill J."/>
        </authorList>
    </citation>
    <scope>NUCLEOTIDE SEQUENCE [LARGE SCALE GENOMIC DNA]</scope>
    <source>
        <strain>Hall / ATCC 3502 / NCTC 13319 / Type A</strain>
    </source>
</reference>
<reference key="2">
    <citation type="journal article" date="2007" name="PLoS ONE">
        <title>Analysis of the neurotoxin complex genes in Clostridium botulinum A1-A4 and B1 strains: BoNT/A3, /Ba4 and /B1 clusters are located within plasmids.</title>
        <authorList>
            <person name="Smith T.J."/>
            <person name="Hill K.K."/>
            <person name="Foley B.T."/>
            <person name="Detter J.C."/>
            <person name="Munk A.C."/>
            <person name="Bruce D.C."/>
            <person name="Doggett N.A."/>
            <person name="Smith L.A."/>
            <person name="Marks J.D."/>
            <person name="Xie G."/>
            <person name="Brettin T.S."/>
        </authorList>
    </citation>
    <scope>NUCLEOTIDE SEQUENCE [LARGE SCALE GENOMIC DNA]</scope>
    <source>
        <strain>Hall / ATCC 3502 / NCTC 13319 / Type A</strain>
    </source>
</reference>
<accession>A5I231</accession>
<accession>A7G3T3</accession>
<evidence type="ECO:0000250" key="1"/>
<evidence type="ECO:0000255" key="2">
    <source>
        <dbReference type="HAMAP-Rule" id="MF_00223"/>
    </source>
</evidence>
<protein>
    <recommendedName>
        <fullName evidence="2">GTP cyclohydrolase 1</fullName>
        <ecNumber evidence="2">3.5.4.16</ecNumber>
    </recommendedName>
    <alternativeName>
        <fullName evidence="2">GTP cyclohydrolase I</fullName>
        <shortName evidence="2">GTP-CH-I</shortName>
    </alternativeName>
</protein>
<name>GCH1_CLOBH</name>
<gene>
    <name evidence="2" type="primary">folE</name>
    <name type="ordered locus">CBO1556</name>
    <name type="ordered locus">CLC_1588</name>
</gene>
<sequence length="196" mass="22270">MAIDVKAIEEHIRGILIALGDNPEREGLKNTPKRVAKMYEEVFKGMCYSNDEIAEMFNVTFEDDLCINDNENDMVFMKEIEIFSHCEHHLALMYNMKVAIAYIPKKKIIGLSKIARIADMVGRRLQLQERIGSDIAEILQKITDSEDVAVIIEGEHGCMTTRGIKKPGTKTITTTLRGKFNTDPIVSNKLMMLYTK</sequence>
<feature type="chain" id="PRO_1000043679" description="GTP cyclohydrolase 1">
    <location>
        <begin position="1"/>
        <end position="196"/>
    </location>
</feature>
<feature type="binding site" evidence="2">
    <location>
        <position position="86"/>
    </location>
    <ligand>
        <name>Zn(2+)</name>
        <dbReference type="ChEBI" id="CHEBI:29105"/>
    </ligand>
</feature>
<feature type="binding site" evidence="2">
    <location>
        <position position="89"/>
    </location>
    <ligand>
        <name>Zn(2+)</name>
        <dbReference type="ChEBI" id="CHEBI:29105"/>
    </ligand>
</feature>
<feature type="binding site" evidence="2">
    <location>
        <position position="158"/>
    </location>
    <ligand>
        <name>Zn(2+)</name>
        <dbReference type="ChEBI" id="CHEBI:29105"/>
    </ligand>
</feature>
<comment type="catalytic activity">
    <reaction evidence="2">
        <text>GTP + H2O = 7,8-dihydroneopterin 3'-triphosphate + formate + H(+)</text>
        <dbReference type="Rhea" id="RHEA:17473"/>
        <dbReference type="ChEBI" id="CHEBI:15377"/>
        <dbReference type="ChEBI" id="CHEBI:15378"/>
        <dbReference type="ChEBI" id="CHEBI:15740"/>
        <dbReference type="ChEBI" id="CHEBI:37565"/>
        <dbReference type="ChEBI" id="CHEBI:58462"/>
        <dbReference type="EC" id="3.5.4.16"/>
    </reaction>
</comment>
<comment type="pathway">
    <text evidence="2">Cofactor biosynthesis; 7,8-dihydroneopterin triphosphate biosynthesis; 7,8-dihydroneopterin triphosphate from GTP: step 1/1.</text>
</comment>
<comment type="subunit">
    <text evidence="1">Toroid-shaped homodecamer, composed of two pentamers of five dimers.</text>
</comment>
<comment type="similarity">
    <text evidence="2">Belongs to the GTP cyclohydrolase I family.</text>
</comment>
<proteinExistence type="inferred from homology"/>
<dbReference type="EC" id="3.5.4.16" evidence="2"/>
<dbReference type="EMBL" id="CP000727">
    <property type="protein sequence ID" value="ABS36547.1"/>
    <property type="molecule type" value="Genomic_DNA"/>
</dbReference>
<dbReference type="EMBL" id="AM412317">
    <property type="protein sequence ID" value="CAL83096.1"/>
    <property type="molecule type" value="Genomic_DNA"/>
</dbReference>
<dbReference type="RefSeq" id="WP_004451708.1">
    <property type="nucleotide sequence ID" value="NC_009698.1"/>
</dbReference>
<dbReference type="RefSeq" id="YP_001254064.1">
    <property type="nucleotide sequence ID" value="NC_009495.1"/>
</dbReference>
<dbReference type="RefSeq" id="YP_001387448.1">
    <property type="nucleotide sequence ID" value="NC_009698.1"/>
</dbReference>
<dbReference type="SMR" id="A5I231"/>
<dbReference type="GeneID" id="5185811"/>
<dbReference type="KEGG" id="cbh:CLC_1588"/>
<dbReference type="KEGG" id="cbo:CBO1556"/>
<dbReference type="PATRIC" id="fig|413999.7.peg.1533"/>
<dbReference type="HOGENOM" id="CLU_049768_3_2_9"/>
<dbReference type="UniPathway" id="UPA00848">
    <property type="reaction ID" value="UER00151"/>
</dbReference>
<dbReference type="PRO" id="PR:A5I231"/>
<dbReference type="Proteomes" id="UP000001986">
    <property type="component" value="Chromosome"/>
</dbReference>
<dbReference type="GO" id="GO:0005737">
    <property type="term" value="C:cytoplasm"/>
    <property type="evidence" value="ECO:0000318"/>
    <property type="project" value="GO_Central"/>
</dbReference>
<dbReference type="GO" id="GO:0005525">
    <property type="term" value="F:GTP binding"/>
    <property type="evidence" value="ECO:0000318"/>
    <property type="project" value="GO_Central"/>
</dbReference>
<dbReference type="GO" id="GO:0003934">
    <property type="term" value="F:GTP cyclohydrolase I activity"/>
    <property type="evidence" value="ECO:0000318"/>
    <property type="project" value="GO_Central"/>
</dbReference>
<dbReference type="GO" id="GO:0008270">
    <property type="term" value="F:zinc ion binding"/>
    <property type="evidence" value="ECO:0000318"/>
    <property type="project" value="GO_Central"/>
</dbReference>
<dbReference type="GO" id="GO:0006730">
    <property type="term" value="P:one-carbon metabolic process"/>
    <property type="evidence" value="ECO:0007669"/>
    <property type="project" value="UniProtKB-UniRule"/>
</dbReference>
<dbReference type="GO" id="GO:0006729">
    <property type="term" value="P:tetrahydrobiopterin biosynthetic process"/>
    <property type="evidence" value="ECO:0000318"/>
    <property type="project" value="GO_Central"/>
</dbReference>
<dbReference type="GO" id="GO:0046654">
    <property type="term" value="P:tetrahydrofolate biosynthetic process"/>
    <property type="evidence" value="ECO:0007669"/>
    <property type="project" value="UniProtKB-UniRule"/>
</dbReference>
<dbReference type="FunFam" id="1.10.286.10:FF:000007">
    <property type="entry name" value="GTP cyclohydrolase 1"/>
    <property type="match status" value="1"/>
</dbReference>
<dbReference type="FunFam" id="3.30.1130.10:FF:000001">
    <property type="entry name" value="GTP cyclohydrolase 1"/>
    <property type="match status" value="1"/>
</dbReference>
<dbReference type="Gene3D" id="1.10.286.10">
    <property type="match status" value="1"/>
</dbReference>
<dbReference type="Gene3D" id="3.30.1130.10">
    <property type="match status" value="1"/>
</dbReference>
<dbReference type="HAMAP" id="MF_00223">
    <property type="entry name" value="FolE"/>
    <property type="match status" value="1"/>
</dbReference>
<dbReference type="InterPro" id="IPR043133">
    <property type="entry name" value="GTP-CH-I_C/QueF"/>
</dbReference>
<dbReference type="InterPro" id="IPR043134">
    <property type="entry name" value="GTP-CH-I_N"/>
</dbReference>
<dbReference type="InterPro" id="IPR001474">
    <property type="entry name" value="GTP_CycHdrlase_I"/>
</dbReference>
<dbReference type="InterPro" id="IPR018234">
    <property type="entry name" value="GTP_CycHdrlase_I_CS"/>
</dbReference>
<dbReference type="InterPro" id="IPR020602">
    <property type="entry name" value="GTP_CycHdrlase_I_dom"/>
</dbReference>
<dbReference type="NCBIfam" id="TIGR00063">
    <property type="entry name" value="folE"/>
    <property type="match status" value="1"/>
</dbReference>
<dbReference type="NCBIfam" id="NF006825">
    <property type="entry name" value="PRK09347.1-2"/>
    <property type="match status" value="1"/>
</dbReference>
<dbReference type="NCBIfam" id="NF006826">
    <property type="entry name" value="PRK09347.1-3"/>
    <property type="match status" value="1"/>
</dbReference>
<dbReference type="PANTHER" id="PTHR11109:SF7">
    <property type="entry name" value="GTP CYCLOHYDROLASE 1"/>
    <property type="match status" value="1"/>
</dbReference>
<dbReference type="PANTHER" id="PTHR11109">
    <property type="entry name" value="GTP CYCLOHYDROLASE I"/>
    <property type="match status" value="1"/>
</dbReference>
<dbReference type="Pfam" id="PF01227">
    <property type="entry name" value="GTP_cyclohydroI"/>
    <property type="match status" value="1"/>
</dbReference>
<dbReference type="SUPFAM" id="SSF55620">
    <property type="entry name" value="Tetrahydrobiopterin biosynthesis enzymes-like"/>
    <property type="match status" value="1"/>
</dbReference>
<dbReference type="PROSITE" id="PS00859">
    <property type="entry name" value="GTP_CYCLOHYDROL_1_1"/>
    <property type="match status" value="1"/>
</dbReference>